<protein>
    <recommendedName>
        <fullName evidence="1">YcgL domain-containing protein Pfl01_1389</fullName>
    </recommendedName>
</protein>
<sequence length="97" mass="11134">MKRICSIYQSSKKSGMYLYVLKSDALERVPEGLMAAFGKAKHSFDLVLTPERKLASEDIAVVLENLEKQGYHLQMPPAEEEYIEHLPEELLRRNDPV</sequence>
<name>Y1389_PSEPF</name>
<organism>
    <name type="scientific">Pseudomonas fluorescens (strain Pf0-1)</name>
    <dbReference type="NCBI Taxonomy" id="205922"/>
    <lineage>
        <taxon>Bacteria</taxon>
        <taxon>Pseudomonadati</taxon>
        <taxon>Pseudomonadota</taxon>
        <taxon>Gammaproteobacteria</taxon>
        <taxon>Pseudomonadales</taxon>
        <taxon>Pseudomonadaceae</taxon>
        <taxon>Pseudomonas</taxon>
    </lineage>
</organism>
<feature type="chain" id="PRO_0000375333" description="YcgL domain-containing protein Pfl01_1389">
    <location>
        <begin position="1"/>
        <end position="97"/>
    </location>
</feature>
<feature type="domain" description="YcgL" evidence="1">
    <location>
        <begin position="3"/>
        <end position="87"/>
    </location>
</feature>
<accession>Q3KGH4</accession>
<evidence type="ECO:0000255" key="1">
    <source>
        <dbReference type="HAMAP-Rule" id="MF_01866"/>
    </source>
</evidence>
<dbReference type="EMBL" id="CP000094">
    <property type="protein sequence ID" value="ABA73132.1"/>
    <property type="molecule type" value="Genomic_DNA"/>
</dbReference>
<dbReference type="RefSeq" id="WP_007958052.1">
    <property type="nucleotide sequence ID" value="NC_007492.2"/>
</dbReference>
<dbReference type="SMR" id="Q3KGH4"/>
<dbReference type="KEGG" id="pfo:Pfl01_1389"/>
<dbReference type="eggNOG" id="COG3100">
    <property type="taxonomic scope" value="Bacteria"/>
</dbReference>
<dbReference type="HOGENOM" id="CLU_155118_2_0_6"/>
<dbReference type="Proteomes" id="UP000002704">
    <property type="component" value="Chromosome"/>
</dbReference>
<dbReference type="Gene3D" id="3.10.510.20">
    <property type="entry name" value="YcgL domain"/>
    <property type="match status" value="1"/>
</dbReference>
<dbReference type="HAMAP" id="MF_01866">
    <property type="entry name" value="UPF0745"/>
    <property type="match status" value="1"/>
</dbReference>
<dbReference type="InterPro" id="IPR038068">
    <property type="entry name" value="YcgL-like_sf"/>
</dbReference>
<dbReference type="InterPro" id="IPR027354">
    <property type="entry name" value="YcgL_dom"/>
</dbReference>
<dbReference type="PANTHER" id="PTHR38109">
    <property type="entry name" value="PROTEIN YCGL"/>
    <property type="match status" value="1"/>
</dbReference>
<dbReference type="PANTHER" id="PTHR38109:SF1">
    <property type="entry name" value="PROTEIN YCGL"/>
    <property type="match status" value="1"/>
</dbReference>
<dbReference type="Pfam" id="PF05166">
    <property type="entry name" value="YcgL"/>
    <property type="match status" value="1"/>
</dbReference>
<dbReference type="SUPFAM" id="SSF160191">
    <property type="entry name" value="YcgL-like"/>
    <property type="match status" value="1"/>
</dbReference>
<dbReference type="PROSITE" id="PS51648">
    <property type="entry name" value="YCGL"/>
    <property type="match status" value="1"/>
</dbReference>
<gene>
    <name type="ordered locus">Pfl01_1389</name>
</gene>
<reference key="1">
    <citation type="journal article" date="2009" name="Genome Biol.">
        <title>Genomic and genetic analyses of diversity and plant interactions of Pseudomonas fluorescens.</title>
        <authorList>
            <person name="Silby M.W."/>
            <person name="Cerdeno-Tarraga A.M."/>
            <person name="Vernikos G.S."/>
            <person name="Giddens S.R."/>
            <person name="Jackson R.W."/>
            <person name="Preston G.M."/>
            <person name="Zhang X.-X."/>
            <person name="Moon C.D."/>
            <person name="Gehrig S.M."/>
            <person name="Godfrey S.A.C."/>
            <person name="Knight C.G."/>
            <person name="Malone J.G."/>
            <person name="Robinson Z."/>
            <person name="Spiers A.J."/>
            <person name="Harris S."/>
            <person name="Challis G.L."/>
            <person name="Yaxley A.M."/>
            <person name="Harris D."/>
            <person name="Seeger K."/>
            <person name="Murphy L."/>
            <person name="Rutter S."/>
            <person name="Squares R."/>
            <person name="Quail M.A."/>
            <person name="Saunders E."/>
            <person name="Mavromatis K."/>
            <person name="Brettin T.S."/>
            <person name="Bentley S.D."/>
            <person name="Hothersall J."/>
            <person name="Stephens E."/>
            <person name="Thomas C.M."/>
            <person name="Parkhill J."/>
            <person name="Levy S.B."/>
            <person name="Rainey P.B."/>
            <person name="Thomson N.R."/>
        </authorList>
    </citation>
    <scope>NUCLEOTIDE SEQUENCE [LARGE SCALE GENOMIC DNA]</scope>
    <source>
        <strain>Pf0-1</strain>
    </source>
</reference>
<proteinExistence type="inferred from homology"/>